<dbReference type="EC" id="3.5.3.8" evidence="1"/>
<dbReference type="EMBL" id="CR628336">
    <property type="protein sequence ID" value="CAH11912.1"/>
    <property type="molecule type" value="Genomic_DNA"/>
</dbReference>
<dbReference type="RefSeq" id="WP_011213289.1">
    <property type="nucleotide sequence ID" value="NC_006368.1"/>
</dbReference>
<dbReference type="SMR" id="Q5X741"/>
<dbReference type="KEGG" id="lpp:lpp0764"/>
<dbReference type="LegioList" id="lpp0764"/>
<dbReference type="HOGENOM" id="CLU_039478_2_0_6"/>
<dbReference type="UniPathway" id="UPA00379">
    <property type="reaction ID" value="UER00552"/>
</dbReference>
<dbReference type="GO" id="GO:0008783">
    <property type="term" value="F:agmatinase activity"/>
    <property type="evidence" value="ECO:0007669"/>
    <property type="project" value="TreeGrafter"/>
</dbReference>
<dbReference type="GO" id="GO:0050415">
    <property type="term" value="F:formimidoylglutamase activity"/>
    <property type="evidence" value="ECO:0007669"/>
    <property type="project" value="UniProtKB-UniRule"/>
</dbReference>
<dbReference type="GO" id="GO:0030145">
    <property type="term" value="F:manganese ion binding"/>
    <property type="evidence" value="ECO:0007669"/>
    <property type="project" value="UniProtKB-UniRule"/>
</dbReference>
<dbReference type="GO" id="GO:0019556">
    <property type="term" value="P:L-histidine catabolic process to glutamate and formamide"/>
    <property type="evidence" value="ECO:0007669"/>
    <property type="project" value="UniProtKB-UniPathway"/>
</dbReference>
<dbReference type="GO" id="GO:0019557">
    <property type="term" value="P:L-histidine catabolic process to glutamate and formate"/>
    <property type="evidence" value="ECO:0007669"/>
    <property type="project" value="UniProtKB-UniPathway"/>
</dbReference>
<dbReference type="GO" id="GO:0033389">
    <property type="term" value="P:putrescine biosynthetic process from arginine, via agmatine"/>
    <property type="evidence" value="ECO:0007669"/>
    <property type="project" value="TreeGrafter"/>
</dbReference>
<dbReference type="CDD" id="cd09988">
    <property type="entry name" value="Formimidoylglutamase"/>
    <property type="match status" value="1"/>
</dbReference>
<dbReference type="Gene3D" id="3.40.800.10">
    <property type="entry name" value="Ureohydrolase domain"/>
    <property type="match status" value="1"/>
</dbReference>
<dbReference type="HAMAP" id="MF_00737">
    <property type="entry name" value="Formimidoylglutam"/>
    <property type="match status" value="1"/>
</dbReference>
<dbReference type="InterPro" id="IPR005923">
    <property type="entry name" value="HutG"/>
</dbReference>
<dbReference type="InterPro" id="IPR006035">
    <property type="entry name" value="Ureohydrolase"/>
</dbReference>
<dbReference type="InterPro" id="IPR023696">
    <property type="entry name" value="Ureohydrolase_dom_sf"/>
</dbReference>
<dbReference type="NCBIfam" id="TIGR01227">
    <property type="entry name" value="hutG"/>
    <property type="match status" value="1"/>
</dbReference>
<dbReference type="PANTHER" id="PTHR11358">
    <property type="entry name" value="ARGINASE/AGMATINASE"/>
    <property type="match status" value="1"/>
</dbReference>
<dbReference type="PANTHER" id="PTHR11358:SF35">
    <property type="entry name" value="FORMIMIDOYLGLUTAMASE"/>
    <property type="match status" value="1"/>
</dbReference>
<dbReference type="Pfam" id="PF00491">
    <property type="entry name" value="Arginase"/>
    <property type="match status" value="1"/>
</dbReference>
<dbReference type="PIRSF" id="PIRSF036979">
    <property type="entry name" value="Arginase"/>
    <property type="match status" value="1"/>
</dbReference>
<dbReference type="SUPFAM" id="SSF52768">
    <property type="entry name" value="Arginase/deacetylase"/>
    <property type="match status" value="1"/>
</dbReference>
<dbReference type="PROSITE" id="PS51409">
    <property type="entry name" value="ARGINASE_2"/>
    <property type="match status" value="1"/>
</dbReference>
<name>HUTG_LEGPA</name>
<organism>
    <name type="scientific">Legionella pneumophila (strain Paris)</name>
    <dbReference type="NCBI Taxonomy" id="297246"/>
    <lineage>
        <taxon>Bacteria</taxon>
        <taxon>Pseudomonadati</taxon>
        <taxon>Pseudomonadota</taxon>
        <taxon>Gammaproteobacteria</taxon>
        <taxon>Legionellales</taxon>
        <taxon>Legionellaceae</taxon>
        <taxon>Legionella</taxon>
    </lineage>
</organism>
<reference key="1">
    <citation type="journal article" date="2004" name="Nat. Genet.">
        <title>Evidence in the Legionella pneumophila genome for exploitation of host cell functions and high genome plasticity.</title>
        <authorList>
            <person name="Cazalet C."/>
            <person name="Rusniok C."/>
            <person name="Brueggemann H."/>
            <person name="Zidane N."/>
            <person name="Magnier A."/>
            <person name="Ma L."/>
            <person name="Tichit M."/>
            <person name="Jarraud S."/>
            <person name="Bouchier C."/>
            <person name="Vandenesch F."/>
            <person name="Kunst F."/>
            <person name="Etienne J."/>
            <person name="Glaser P."/>
            <person name="Buchrieser C."/>
        </authorList>
    </citation>
    <scope>NUCLEOTIDE SEQUENCE [LARGE SCALE GENOMIC DNA]</scope>
    <source>
        <strain>Paris</strain>
    </source>
</reference>
<sequence>MFDDLSNYRPANPALWQGRMDTANQERFFQKITFIDNQNELMTKDKKTIFLGFASDAGIKRNLGRTGAKLGPDQIKTQLAKLPCHNNKHYVDLGNVVCENDELELSQSQFAQIVHFCHENGHQICAFGGGHEIAWAHYQGLSSLYPKLGVINFDAHFDLRPYKKGEFGNSGTPFSQIATYCEEKKMPFHYCCIGVQKFGNTPSLFEKAKELNVSYLSAEDLYEQSQAWQIAFLDDFILNLDHIYLTICLDVLAECYAPGVSAPQALGLSPWQIMPLLKYLIQSGKVVSLDIAELSPPLDSELKTARLAALIIAELLDTN</sequence>
<accession>Q5X741</accession>
<proteinExistence type="inferred from homology"/>
<feature type="chain" id="PRO_0000173757" description="Formimidoylglutamase">
    <location>
        <begin position="1"/>
        <end position="319"/>
    </location>
</feature>
<feature type="binding site" evidence="1">
    <location>
        <position position="131"/>
    </location>
    <ligand>
        <name>Mn(2+)</name>
        <dbReference type="ChEBI" id="CHEBI:29035"/>
        <label>1</label>
    </ligand>
</feature>
<feature type="binding site" evidence="1">
    <location>
        <position position="154"/>
    </location>
    <ligand>
        <name>Mn(2+)</name>
        <dbReference type="ChEBI" id="CHEBI:29035"/>
        <label>1</label>
    </ligand>
</feature>
<feature type="binding site" evidence="1">
    <location>
        <position position="154"/>
    </location>
    <ligand>
        <name>Mn(2+)</name>
        <dbReference type="ChEBI" id="CHEBI:29035"/>
        <label>2</label>
    </ligand>
</feature>
<feature type="binding site" evidence="1">
    <location>
        <position position="156"/>
    </location>
    <ligand>
        <name>Mn(2+)</name>
        <dbReference type="ChEBI" id="CHEBI:29035"/>
        <label>2</label>
    </ligand>
</feature>
<feature type="binding site" evidence="1">
    <location>
        <position position="158"/>
    </location>
    <ligand>
        <name>Mn(2+)</name>
        <dbReference type="ChEBI" id="CHEBI:29035"/>
        <label>1</label>
    </ligand>
</feature>
<feature type="binding site" evidence="1">
    <location>
        <position position="248"/>
    </location>
    <ligand>
        <name>Mn(2+)</name>
        <dbReference type="ChEBI" id="CHEBI:29035"/>
        <label>1</label>
    </ligand>
</feature>
<feature type="binding site" evidence="1">
    <location>
        <position position="248"/>
    </location>
    <ligand>
        <name>Mn(2+)</name>
        <dbReference type="ChEBI" id="CHEBI:29035"/>
        <label>2</label>
    </ligand>
</feature>
<feature type="binding site" evidence="1">
    <location>
        <position position="250"/>
    </location>
    <ligand>
        <name>Mn(2+)</name>
        <dbReference type="ChEBI" id="CHEBI:29035"/>
        <label>2</label>
    </ligand>
</feature>
<protein>
    <recommendedName>
        <fullName evidence="1">Formimidoylglutamase</fullName>
        <ecNumber evidence="1">3.5.3.8</ecNumber>
    </recommendedName>
    <alternativeName>
        <fullName evidence="1">Formiminoglutamase</fullName>
    </alternativeName>
    <alternativeName>
        <fullName evidence="1">Formiminoglutamate hydrolase</fullName>
    </alternativeName>
</protein>
<gene>
    <name evidence="1" type="primary">hutG</name>
    <name type="ordered locus">lpp0764</name>
</gene>
<keyword id="KW-0369">Histidine metabolism</keyword>
<keyword id="KW-0378">Hydrolase</keyword>
<keyword id="KW-0464">Manganese</keyword>
<keyword id="KW-0479">Metal-binding</keyword>
<evidence type="ECO:0000255" key="1">
    <source>
        <dbReference type="HAMAP-Rule" id="MF_00737"/>
    </source>
</evidence>
<comment type="function">
    <text evidence="1">Catalyzes the conversion of N-formimidoyl-L-glutamate to L-glutamate and formamide.</text>
</comment>
<comment type="catalytic activity">
    <reaction evidence="1">
        <text>N-formimidoyl-L-glutamate + H2O = formamide + L-glutamate</text>
        <dbReference type="Rhea" id="RHEA:22492"/>
        <dbReference type="ChEBI" id="CHEBI:15377"/>
        <dbReference type="ChEBI" id="CHEBI:16397"/>
        <dbReference type="ChEBI" id="CHEBI:29985"/>
        <dbReference type="ChEBI" id="CHEBI:58928"/>
        <dbReference type="EC" id="3.5.3.8"/>
    </reaction>
</comment>
<comment type="cofactor">
    <cofactor evidence="1">
        <name>Mn(2+)</name>
        <dbReference type="ChEBI" id="CHEBI:29035"/>
    </cofactor>
    <text evidence="1">Binds 2 manganese ions per subunit.</text>
</comment>
<comment type="pathway">
    <text evidence="1">Amino-acid degradation; L-histidine degradation into L-glutamate; L-glutamate from N-formimidoyl-L-glutamate (hydrolase route): step 1/1.</text>
</comment>
<comment type="similarity">
    <text evidence="1">Belongs to the arginase family.</text>
</comment>